<gene>
    <name evidence="1" type="primary">atpB</name>
    <name type="ordered locus">Adeh_4340</name>
</gene>
<accession>Q2IHP4</accession>
<protein>
    <recommendedName>
        <fullName evidence="1">ATP synthase subunit a</fullName>
    </recommendedName>
    <alternativeName>
        <fullName evidence="1">ATP synthase F0 sector subunit a</fullName>
    </alternativeName>
    <alternativeName>
        <fullName evidence="1">F-ATPase subunit 6</fullName>
    </alternativeName>
</protein>
<reference key="1">
    <citation type="submission" date="2006-01" db="EMBL/GenBank/DDBJ databases">
        <title>Complete sequence of Anaeromyxobacter dehalogenans 2CP-C.</title>
        <authorList>
            <person name="Copeland A."/>
            <person name="Lucas S."/>
            <person name="Lapidus A."/>
            <person name="Barry K."/>
            <person name="Detter J.C."/>
            <person name="Glavina T."/>
            <person name="Hammon N."/>
            <person name="Israni S."/>
            <person name="Pitluck S."/>
            <person name="Brettin T."/>
            <person name="Bruce D."/>
            <person name="Han C."/>
            <person name="Tapia R."/>
            <person name="Gilna P."/>
            <person name="Kiss H."/>
            <person name="Schmutz J."/>
            <person name="Larimer F."/>
            <person name="Land M."/>
            <person name="Kyrpides N."/>
            <person name="Anderson I."/>
            <person name="Sanford R.A."/>
            <person name="Ritalahti K.M."/>
            <person name="Thomas H.S."/>
            <person name="Kirby J.R."/>
            <person name="Zhulin I.B."/>
            <person name="Loeffler F.E."/>
            <person name="Richardson P."/>
        </authorList>
    </citation>
    <scope>NUCLEOTIDE SEQUENCE [LARGE SCALE GENOMIC DNA]</scope>
    <source>
        <strain>2CP-C</strain>
    </source>
</reference>
<comment type="function">
    <text evidence="1">Key component of the proton channel; it plays a direct role in the translocation of protons across the membrane.</text>
</comment>
<comment type="subunit">
    <text evidence="1">F-type ATPases have 2 components, CF(1) - the catalytic core - and CF(0) - the membrane proton channel. CF(1) has five subunits: alpha(3), beta(3), gamma(1), delta(1), epsilon(1). CF(0) has three main subunits: a(1), b(2) and c(9-12). The alpha and beta chains form an alternating ring which encloses part of the gamma chain. CF(1) is attached to CF(0) by a central stalk formed by the gamma and epsilon chains, while a peripheral stalk is formed by the delta and b chains.</text>
</comment>
<comment type="subcellular location">
    <subcellularLocation>
        <location evidence="1">Cell inner membrane</location>
        <topology evidence="1">Multi-pass membrane protein</topology>
    </subcellularLocation>
</comment>
<comment type="similarity">
    <text evidence="1">Belongs to the ATPase A chain family.</text>
</comment>
<name>ATP6_ANADE</name>
<organism>
    <name type="scientific">Anaeromyxobacter dehalogenans (strain 2CP-C)</name>
    <dbReference type="NCBI Taxonomy" id="290397"/>
    <lineage>
        <taxon>Bacteria</taxon>
        <taxon>Pseudomonadati</taxon>
        <taxon>Myxococcota</taxon>
        <taxon>Myxococcia</taxon>
        <taxon>Myxococcales</taxon>
        <taxon>Cystobacterineae</taxon>
        <taxon>Anaeromyxobacteraceae</taxon>
        <taxon>Anaeromyxobacter</taxon>
    </lineage>
</organism>
<dbReference type="EMBL" id="CP000251">
    <property type="protein sequence ID" value="ABC84103.1"/>
    <property type="molecule type" value="Genomic_DNA"/>
</dbReference>
<dbReference type="RefSeq" id="WP_011423385.1">
    <property type="nucleotide sequence ID" value="NC_007760.1"/>
</dbReference>
<dbReference type="STRING" id="290397.Adeh_4340"/>
<dbReference type="KEGG" id="ade:Adeh_4340"/>
<dbReference type="eggNOG" id="COG0356">
    <property type="taxonomic scope" value="Bacteria"/>
</dbReference>
<dbReference type="HOGENOM" id="CLU_041018_0_0_7"/>
<dbReference type="OrthoDB" id="9809130at2"/>
<dbReference type="Proteomes" id="UP000001935">
    <property type="component" value="Chromosome"/>
</dbReference>
<dbReference type="GO" id="GO:0005886">
    <property type="term" value="C:plasma membrane"/>
    <property type="evidence" value="ECO:0007669"/>
    <property type="project" value="UniProtKB-SubCell"/>
</dbReference>
<dbReference type="GO" id="GO:0045259">
    <property type="term" value="C:proton-transporting ATP synthase complex"/>
    <property type="evidence" value="ECO:0007669"/>
    <property type="project" value="UniProtKB-KW"/>
</dbReference>
<dbReference type="GO" id="GO:0046933">
    <property type="term" value="F:proton-transporting ATP synthase activity, rotational mechanism"/>
    <property type="evidence" value="ECO:0007669"/>
    <property type="project" value="UniProtKB-UniRule"/>
</dbReference>
<dbReference type="CDD" id="cd00310">
    <property type="entry name" value="ATP-synt_Fo_a_6"/>
    <property type="match status" value="1"/>
</dbReference>
<dbReference type="Gene3D" id="1.20.120.220">
    <property type="entry name" value="ATP synthase, F0 complex, subunit A"/>
    <property type="match status" value="1"/>
</dbReference>
<dbReference type="HAMAP" id="MF_01393">
    <property type="entry name" value="ATP_synth_a_bact"/>
    <property type="match status" value="1"/>
</dbReference>
<dbReference type="InterPro" id="IPR000568">
    <property type="entry name" value="ATP_synth_F0_asu"/>
</dbReference>
<dbReference type="InterPro" id="IPR023011">
    <property type="entry name" value="ATP_synth_F0_asu_AS"/>
</dbReference>
<dbReference type="InterPro" id="IPR045083">
    <property type="entry name" value="ATP_synth_F0_asu_bact/mt"/>
</dbReference>
<dbReference type="InterPro" id="IPR035908">
    <property type="entry name" value="F0_ATP_A_sf"/>
</dbReference>
<dbReference type="NCBIfam" id="TIGR01131">
    <property type="entry name" value="ATP_synt_6_or_A"/>
    <property type="match status" value="1"/>
</dbReference>
<dbReference type="NCBIfam" id="NF009953">
    <property type="entry name" value="PRK13419.1"/>
    <property type="match status" value="1"/>
</dbReference>
<dbReference type="PANTHER" id="PTHR11410">
    <property type="entry name" value="ATP SYNTHASE SUBUNIT A"/>
    <property type="match status" value="1"/>
</dbReference>
<dbReference type="PANTHER" id="PTHR11410:SF0">
    <property type="entry name" value="ATP SYNTHASE SUBUNIT A"/>
    <property type="match status" value="1"/>
</dbReference>
<dbReference type="Pfam" id="PF00119">
    <property type="entry name" value="ATP-synt_A"/>
    <property type="match status" value="1"/>
</dbReference>
<dbReference type="PRINTS" id="PR00123">
    <property type="entry name" value="ATPASEA"/>
</dbReference>
<dbReference type="SUPFAM" id="SSF81336">
    <property type="entry name" value="F1F0 ATP synthase subunit A"/>
    <property type="match status" value="1"/>
</dbReference>
<dbReference type="PROSITE" id="PS00449">
    <property type="entry name" value="ATPASE_A"/>
    <property type="match status" value="1"/>
</dbReference>
<keyword id="KW-0066">ATP synthesis</keyword>
<keyword id="KW-0997">Cell inner membrane</keyword>
<keyword id="KW-1003">Cell membrane</keyword>
<keyword id="KW-0138">CF(0)</keyword>
<keyword id="KW-0375">Hydrogen ion transport</keyword>
<keyword id="KW-0406">Ion transport</keyword>
<keyword id="KW-0472">Membrane</keyword>
<keyword id="KW-1185">Reference proteome</keyword>
<keyword id="KW-0812">Transmembrane</keyword>
<keyword id="KW-1133">Transmembrane helix</keyword>
<keyword id="KW-0813">Transport</keyword>
<proteinExistence type="inferred from homology"/>
<sequence length="381" mass="40143">MTAATLVTLALSLSLAQHDAAPAPVAAPVEQHGQAPEAAPDAHGSPAGEPGAAVEAHAAAAEHGEAAGHEGGHDESLGAVMLHHVTDGYVIEHPGLCHGGLAWNCEWDLRETFGDSLKFGKLDMTPTKHVVMMWLASALLLVVVLGAVRKKSLVPRGLYNFIELLVAFVRNEIAVKNMGEKDADRFTPYLVTAFFFILFLNLFGLLPFSATATANLSVTVAMALFTFVITQYAAIRAMGMGGYLAHLTGGVPKSLAPLWLIMIPVEFLGLFTKPFALTVRLFANMLAGHFVILALLGLIFALGTPWVAFGSVPMALSIFLLELFVAFVQAYIFTMLSSLFIGAGLVHHGDDHGHAEEHGHAGPAAGSEHGSHVAGASPGHG</sequence>
<evidence type="ECO:0000255" key="1">
    <source>
        <dbReference type="HAMAP-Rule" id="MF_01393"/>
    </source>
</evidence>
<evidence type="ECO:0000256" key="2">
    <source>
        <dbReference type="SAM" id="MobiDB-lite"/>
    </source>
</evidence>
<feature type="chain" id="PRO_5000108472" description="ATP synthase subunit a">
    <location>
        <begin position="1"/>
        <end position="381"/>
    </location>
</feature>
<feature type="transmembrane region" description="Helical" evidence="1">
    <location>
        <begin position="128"/>
        <end position="148"/>
    </location>
</feature>
<feature type="transmembrane region" description="Helical" evidence="1">
    <location>
        <begin position="190"/>
        <end position="210"/>
    </location>
</feature>
<feature type="transmembrane region" description="Helical" evidence="1">
    <location>
        <begin position="215"/>
        <end position="235"/>
    </location>
</feature>
<feature type="transmembrane region" description="Helical" evidence="1">
    <location>
        <begin position="255"/>
        <end position="275"/>
    </location>
</feature>
<feature type="transmembrane region" description="Helical" evidence="1">
    <location>
        <begin position="290"/>
        <end position="310"/>
    </location>
</feature>
<feature type="transmembrane region" description="Helical" evidence="1">
    <location>
        <begin position="316"/>
        <end position="336"/>
    </location>
</feature>
<feature type="region of interest" description="Disordered" evidence="2">
    <location>
        <begin position="24"/>
        <end position="73"/>
    </location>
</feature>
<feature type="region of interest" description="Disordered" evidence="2">
    <location>
        <begin position="351"/>
        <end position="381"/>
    </location>
</feature>
<feature type="compositionally biased region" description="Low complexity" evidence="2">
    <location>
        <begin position="47"/>
        <end position="59"/>
    </location>
</feature>
<feature type="compositionally biased region" description="Basic and acidic residues" evidence="2">
    <location>
        <begin position="60"/>
        <end position="73"/>
    </location>
</feature>
<feature type="compositionally biased region" description="Basic and acidic residues" evidence="2">
    <location>
        <begin position="351"/>
        <end position="360"/>
    </location>
</feature>